<name>SAMD1_HUMAN</name>
<evidence type="ECO:0000255" key="1">
    <source>
        <dbReference type="PROSITE-ProRule" id="PRU00184"/>
    </source>
</evidence>
<evidence type="ECO:0000255" key="2">
    <source>
        <dbReference type="PROSITE-ProRule" id="PRU01358"/>
    </source>
</evidence>
<evidence type="ECO:0000256" key="3">
    <source>
        <dbReference type="SAM" id="MobiDB-lite"/>
    </source>
</evidence>
<evidence type="ECO:0000269" key="4">
    <source>
    </source>
</evidence>
<evidence type="ECO:0000269" key="5">
    <source>
    </source>
</evidence>
<evidence type="ECO:0000269" key="6">
    <source>
    </source>
</evidence>
<evidence type="ECO:0000303" key="7">
    <source>
    </source>
</evidence>
<evidence type="ECO:0000305" key="8"/>
<evidence type="ECO:0000312" key="9">
    <source>
        <dbReference type="HGNC" id="HGNC:17958"/>
    </source>
</evidence>
<evidence type="ECO:0007744" key="10">
    <source>
        <dbReference type="PDB" id="6LUI"/>
    </source>
</evidence>
<evidence type="ECO:0007744" key="11">
    <source>
        <dbReference type="PDB" id="6LUJ"/>
    </source>
</evidence>
<evidence type="ECO:0007744" key="12">
    <source>
        <dbReference type="PDB" id="6LUK"/>
    </source>
</evidence>
<evidence type="ECO:0007744" key="13">
    <source>
    </source>
</evidence>
<evidence type="ECO:0007744" key="14">
    <source>
    </source>
</evidence>
<evidence type="ECO:0007744" key="15">
    <source>
    </source>
</evidence>
<evidence type="ECO:0007744" key="16">
    <source>
    </source>
</evidence>
<evidence type="ECO:0007744" key="17">
    <source>
    </source>
</evidence>
<evidence type="ECO:0007744" key="18">
    <source>
    </source>
</evidence>
<evidence type="ECO:0007744" key="19">
    <source>
    </source>
</evidence>
<evidence type="ECO:0007829" key="20">
    <source>
        <dbReference type="PDB" id="6LUI"/>
    </source>
</evidence>
<evidence type="ECO:0007829" key="21">
    <source>
        <dbReference type="PDB" id="6LUJ"/>
    </source>
</evidence>
<protein>
    <recommendedName>
        <fullName>Sterile alpha motif domain-containing protein 1</fullName>
        <shortName>SAM domain-containing protein 1</shortName>
    </recommendedName>
    <alternativeName>
        <fullName>Atherin</fullName>
    </alternativeName>
</protein>
<feature type="chain" id="PRO_0000279494" description="Sterile alpha motif domain-containing protein 1">
    <location>
        <begin position="1"/>
        <end position="538"/>
    </location>
</feature>
<feature type="domain" description="SAMD1-like winged helix (WH)" evidence="2 7">
    <location>
        <begin position="23"/>
        <end position="99"/>
    </location>
</feature>
<feature type="domain" description="SAM" evidence="1">
    <location>
        <begin position="462"/>
        <end position="530"/>
    </location>
</feature>
<feature type="region of interest" description="Disordered" evidence="3">
    <location>
        <begin position="1"/>
        <end position="30"/>
    </location>
</feature>
<feature type="region of interest" description="Disordered" evidence="3">
    <location>
        <begin position="92"/>
        <end position="247"/>
    </location>
</feature>
<feature type="region of interest" description="Disordered" evidence="3">
    <location>
        <begin position="282"/>
        <end position="458"/>
    </location>
</feature>
<feature type="compositionally biased region" description="Pro residues" evidence="3">
    <location>
        <begin position="1"/>
        <end position="11"/>
    </location>
</feature>
<feature type="compositionally biased region" description="Low complexity" evidence="3">
    <location>
        <begin position="12"/>
        <end position="29"/>
    </location>
</feature>
<feature type="compositionally biased region" description="Low complexity" evidence="3">
    <location>
        <begin position="115"/>
        <end position="125"/>
    </location>
</feature>
<feature type="compositionally biased region" description="Pro residues" evidence="3">
    <location>
        <begin position="126"/>
        <end position="139"/>
    </location>
</feature>
<feature type="compositionally biased region" description="Low complexity" evidence="3">
    <location>
        <begin position="140"/>
        <end position="158"/>
    </location>
</feature>
<feature type="compositionally biased region" description="Low complexity" evidence="3">
    <location>
        <begin position="168"/>
        <end position="177"/>
    </location>
</feature>
<feature type="compositionally biased region" description="Pro residues" evidence="3">
    <location>
        <begin position="178"/>
        <end position="236"/>
    </location>
</feature>
<feature type="compositionally biased region" description="Low complexity" evidence="3">
    <location>
        <begin position="237"/>
        <end position="247"/>
    </location>
</feature>
<feature type="compositionally biased region" description="Basic and acidic residues" evidence="3">
    <location>
        <begin position="282"/>
        <end position="291"/>
    </location>
</feature>
<feature type="compositionally biased region" description="Acidic residues" evidence="3">
    <location>
        <begin position="328"/>
        <end position="351"/>
    </location>
</feature>
<feature type="compositionally biased region" description="Pro residues" evidence="3">
    <location>
        <begin position="425"/>
        <end position="436"/>
    </location>
</feature>
<feature type="modified residue" description="Phosphothreonine" evidence="18">
    <location>
        <position position="107"/>
    </location>
</feature>
<feature type="modified residue" description="Phosphoserine" evidence="13 14 15 16 17 18 19">
    <location>
        <position position="161"/>
    </location>
</feature>
<feature type="modified residue" description="Phosphoserine" evidence="14">
    <location>
        <position position="261"/>
    </location>
</feature>
<feature type="sequence variant" id="VAR_061701" description="In dbSNP:rs8062.">
    <original>E</original>
    <variation>D</variation>
    <location>
        <position position="340"/>
    </location>
</feature>
<feature type="mutagenesis site" description="Slightly decreases binding to unmethylated CpG islands." evidence="5">
    <original>R</original>
    <variation>A</variation>
    <location>
        <position position="43"/>
    </location>
</feature>
<feature type="mutagenesis site" description="Strongly decreases binding to unmethylated CpG islands. Abolishes interaction with KDM1A." evidence="5">
    <original>RK</original>
    <variation>AA</variation>
    <location>
        <begin position="45"/>
        <end position="46"/>
    </location>
</feature>
<feature type="mutagenesis site" description="Decreases binding to unmethylated CpG islands." evidence="5">
    <original>R</original>
    <variation>A</variation>
    <location>
        <position position="48"/>
    </location>
</feature>
<feature type="mutagenesis site" description="Decreases binding to unmethylated CpG islands." evidence="5">
    <original>YK</original>
    <variation>AA</variation>
    <location>
        <begin position="87"/>
        <end position="88"/>
    </location>
</feature>
<feature type="mutagenesis site" description="Decreases binding to unmethylated CpG islands." evidence="5">
    <original>R</original>
    <variation>A</variation>
    <location>
        <position position="94"/>
    </location>
</feature>
<feature type="mutagenesis site" description="Abolishes interaction with L3MBTL3." evidence="5">
    <original>RTDVLTGLSIRLGPALK</original>
    <variation>ATDVLTGLSIRLGPALA</variation>
    <location>
        <begin position="498"/>
        <end position="514"/>
    </location>
</feature>
<feature type="sequence conflict" description="In Ref. 2; AC022098." evidence="8" ref="2">
    <location>
        <begin position="111"/>
        <end position="216"/>
    </location>
</feature>
<feature type="helix" evidence="20">
    <location>
        <begin position="31"/>
        <end position="44"/>
    </location>
</feature>
<feature type="helix" evidence="20">
    <location>
        <begin position="51"/>
        <end position="62"/>
    </location>
</feature>
<feature type="helix" evidence="20">
    <location>
        <begin position="66"/>
        <end position="78"/>
    </location>
</feature>
<feature type="strand" evidence="20">
    <location>
        <begin position="81"/>
        <end position="87"/>
    </location>
</feature>
<feature type="strand" evidence="20">
    <location>
        <begin position="90"/>
        <end position="95"/>
    </location>
</feature>
<feature type="helix" evidence="21">
    <location>
        <begin position="459"/>
        <end position="461"/>
    </location>
</feature>
<feature type="helix" evidence="21">
    <location>
        <begin position="464"/>
        <end position="473"/>
    </location>
</feature>
<feature type="helix" evidence="21">
    <location>
        <begin position="477"/>
        <end position="485"/>
    </location>
</feature>
<feature type="helix" evidence="21">
    <location>
        <begin position="490"/>
        <end position="493"/>
    </location>
</feature>
<feature type="helix" evidence="21">
    <location>
        <begin position="498"/>
        <end position="502"/>
    </location>
</feature>
<feature type="helix" evidence="21">
    <location>
        <begin position="509"/>
        <end position="518"/>
    </location>
</feature>
<feature type="turn" evidence="21">
    <location>
        <begin position="519"/>
        <end position="522"/>
    </location>
</feature>
<comment type="function">
    <text evidence="4 5 6">Unmethylated CpG islands (CGIs)-binding protein which localizes to H3K4me3-decorated CGIs, where it acts as a transcriptional repressor (PubMed:33980486). Tethers L3MBTL3 to chromatin and interacts with the KDM1A histone demethylase complex to modulate H3K4me2 and H3K4me3 levels at CGIs (PubMed:33980486). Plays a role in atherogenesis by binding with LDL on cell surface and promoting LDL oxidation which leads to the formation of foam cell (PubMed:16159594, PubMed:34006929).</text>
</comment>
<comment type="subunit">
    <text evidence="5">Homopolymerize into a closed pentameric ring (PubMed:33980486). Interacts (via SAM domain) with L3MBTL3 (via SAM domain); the interaction mediates L3MBTL3 binding to chromatin (PubMed:33980486). Interacts (via WH domain) with KDM1A; the interaction modulates KDM1A function (PubMed:33980486).</text>
</comment>
<comment type="subcellular location">
    <subcellularLocation>
        <location evidence="6">Nucleus</location>
    </subcellularLocation>
    <subcellularLocation>
        <location evidence="6">Chromosome</location>
    </subcellularLocation>
    <subcellularLocation>
        <location evidence="4 6">Secreted</location>
    </subcellularLocation>
    <text evidence="4 6">In atherosclerotic lesions, it is found in the extracellular compartment and in foam cells cytoplasm.</text>
</comment>
<comment type="tissue specificity">
    <text evidence="4">Expressed in atherosclerotic lesions, not in normal intima. Expressed in foam cells.</text>
</comment>
<comment type="induction">
    <text evidence="6">Expression is inhibited by miRNA MIR378C.</text>
</comment>
<comment type="domain">
    <text evidence="6">Winged-helix (WH) domain directly recognizes and binds unmethylated CpG-containing DNA via simultaneous interactions with both the major and the minor groove of DNA.</text>
</comment>
<comment type="caution">
    <text evidence="8">Due to its high GC content it turned out to be difficult to sequence the 5' end of the gene encoding the N-terminal proline-rich region of the protein and to unambiguously determine which sequence is correct. We display the sequence described in PubMed:16159594. This sequence fits better with orthologous sequences but is not consistent with the human reference genome sequence.</text>
</comment>
<reference key="1">
    <citation type="journal article" date="2005" name="Atherosclerosis">
        <title>Atherin: a newly identified, lesion-specific, LDL-binding protein in human atherosclerosis.</title>
        <authorList>
            <person name="Lees A.M."/>
            <person name="Deconinck A.E."/>
            <person name="Campbell B.D."/>
            <person name="Lees R.S."/>
        </authorList>
    </citation>
    <scope>NUCLEOTIDE SEQUENCE [MRNA]</scope>
    <scope>TISSUE SPECIFICITY</scope>
    <scope>FUNCTION</scope>
    <scope>SUBCELLULAR LOCATION</scope>
    <source>
        <tissue>Aorta</tissue>
    </source>
</reference>
<reference key="2">
    <citation type="journal article" date="2004" name="Nature">
        <title>The DNA sequence and biology of human chromosome 19.</title>
        <authorList>
            <person name="Grimwood J."/>
            <person name="Gordon L.A."/>
            <person name="Olsen A.S."/>
            <person name="Terry A."/>
            <person name="Schmutz J."/>
            <person name="Lamerdin J.E."/>
            <person name="Hellsten U."/>
            <person name="Goodstein D."/>
            <person name="Couronne O."/>
            <person name="Tran-Gyamfi M."/>
            <person name="Aerts A."/>
            <person name="Altherr M."/>
            <person name="Ashworth L."/>
            <person name="Bajorek E."/>
            <person name="Black S."/>
            <person name="Branscomb E."/>
            <person name="Caenepeel S."/>
            <person name="Carrano A.V."/>
            <person name="Caoile C."/>
            <person name="Chan Y.M."/>
            <person name="Christensen M."/>
            <person name="Cleland C.A."/>
            <person name="Copeland A."/>
            <person name="Dalin E."/>
            <person name="Dehal P."/>
            <person name="Denys M."/>
            <person name="Detter J.C."/>
            <person name="Escobar J."/>
            <person name="Flowers D."/>
            <person name="Fotopulos D."/>
            <person name="Garcia C."/>
            <person name="Georgescu A.M."/>
            <person name="Glavina T."/>
            <person name="Gomez M."/>
            <person name="Gonzales E."/>
            <person name="Groza M."/>
            <person name="Hammon N."/>
            <person name="Hawkins T."/>
            <person name="Haydu L."/>
            <person name="Ho I."/>
            <person name="Huang W."/>
            <person name="Israni S."/>
            <person name="Jett J."/>
            <person name="Kadner K."/>
            <person name="Kimball H."/>
            <person name="Kobayashi A."/>
            <person name="Larionov V."/>
            <person name="Leem S.-H."/>
            <person name="Lopez F."/>
            <person name="Lou Y."/>
            <person name="Lowry S."/>
            <person name="Malfatti S."/>
            <person name="Martinez D."/>
            <person name="McCready P.M."/>
            <person name="Medina C."/>
            <person name="Morgan J."/>
            <person name="Nelson K."/>
            <person name="Nolan M."/>
            <person name="Ovcharenko I."/>
            <person name="Pitluck S."/>
            <person name="Pollard M."/>
            <person name="Popkie A.P."/>
            <person name="Predki P."/>
            <person name="Quan G."/>
            <person name="Ramirez L."/>
            <person name="Rash S."/>
            <person name="Retterer J."/>
            <person name="Rodriguez A."/>
            <person name="Rogers S."/>
            <person name="Salamov A."/>
            <person name="Salazar A."/>
            <person name="She X."/>
            <person name="Smith D."/>
            <person name="Slezak T."/>
            <person name="Solovyev V."/>
            <person name="Thayer N."/>
            <person name="Tice H."/>
            <person name="Tsai M."/>
            <person name="Ustaszewska A."/>
            <person name="Vo N."/>
            <person name="Wagner M."/>
            <person name="Wheeler J."/>
            <person name="Wu K."/>
            <person name="Xie G."/>
            <person name="Yang J."/>
            <person name="Dubchak I."/>
            <person name="Furey T.S."/>
            <person name="DeJong P."/>
            <person name="Dickson M."/>
            <person name="Gordon D."/>
            <person name="Eichler E.E."/>
            <person name="Pennacchio L.A."/>
            <person name="Richardson P."/>
            <person name="Stubbs L."/>
            <person name="Rokhsar D.S."/>
            <person name="Myers R.M."/>
            <person name="Rubin E.M."/>
            <person name="Lucas S.M."/>
        </authorList>
    </citation>
    <scope>NUCLEOTIDE SEQUENCE [LARGE SCALE GENOMIC DNA]</scope>
</reference>
<reference key="3">
    <citation type="journal article" date="2004" name="Genome Res.">
        <title>The status, quality, and expansion of the NIH full-length cDNA project: the Mammalian Gene Collection (MGC).</title>
        <authorList>
            <consortium name="The MGC Project Team"/>
        </authorList>
    </citation>
    <scope>NUCLEOTIDE SEQUENCE [LARGE SCALE MRNA] OF 244-538</scope>
    <source>
        <tissue>Lung</tissue>
        <tissue>Lymph</tissue>
        <tissue>Ovary</tissue>
    </source>
</reference>
<reference key="4">
    <citation type="journal article" date="2006" name="Cell">
        <title>Global, in vivo, and site-specific phosphorylation dynamics in signaling networks.</title>
        <authorList>
            <person name="Olsen J.V."/>
            <person name="Blagoev B."/>
            <person name="Gnad F."/>
            <person name="Macek B."/>
            <person name="Kumar C."/>
            <person name="Mortensen P."/>
            <person name="Mann M."/>
        </authorList>
    </citation>
    <scope>PHOSPHORYLATION [LARGE SCALE ANALYSIS] AT SER-161</scope>
    <scope>IDENTIFICATION BY MASS SPECTROMETRY [LARGE SCALE ANALYSIS]</scope>
    <source>
        <tissue>Cervix carcinoma</tissue>
    </source>
</reference>
<reference key="5">
    <citation type="journal article" date="2008" name="Mol. Cell">
        <title>Kinase-selective enrichment enables quantitative phosphoproteomics of the kinome across the cell cycle.</title>
        <authorList>
            <person name="Daub H."/>
            <person name="Olsen J.V."/>
            <person name="Bairlein M."/>
            <person name="Gnad F."/>
            <person name="Oppermann F.S."/>
            <person name="Korner R."/>
            <person name="Greff Z."/>
            <person name="Keri G."/>
            <person name="Stemmann O."/>
            <person name="Mann M."/>
        </authorList>
    </citation>
    <scope>PHOSPHORYLATION [LARGE SCALE ANALYSIS] AT SER-161</scope>
    <scope>IDENTIFICATION BY MASS SPECTROMETRY [LARGE SCALE ANALYSIS]</scope>
    <source>
        <tissue>Cervix carcinoma</tissue>
    </source>
</reference>
<reference key="6">
    <citation type="journal article" date="2008" name="Proc. Natl. Acad. Sci. U.S.A.">
        <title>A quantitative atlas of mitotic phosphorylation.</title>
        <authorList>
            <person name="Dephoure N."/>
            <person name="Zhou C."/>
            <person name="Villen J."/>
            <person name="Beausoleil S.A."/>
            <person name="Bakalarski C.E."/>
            <person name="Elledge S.J."/>
            <person name="Gygi S.P."/>
        </authorList>
    </citation>
    <scope>PHOSPHORYLATION [LARGE SCALE ANALYSIS] AT SER-161 AND SER-261</scope>
    <scope>IDENTIFICATION BY MASS SPECTROMETRY [LARGE SCALE ANALYSIS]</scope>
    <source>
        <tissue>Cervix carcinoma</tissue>
    </source>
</reference>
<reference key="7">
    <citation type="journal article" date="2009" name="Anal. Chem.">
        <title>Lys-N and trypsin cover complementary parts of the phosphoproteome in a refined SCX-based approach.</title>
        <authorList>
            <person name="Gauci S."/>
            <person name="Helbig A.O."/>
            <person name="Slijper M."/>
            <person name="Krijgsveld J."/>
            <person name="Heck A.J."/>
            <person name="Mohammed S."/>
        </authorList>
    </citation>
    <scope>IDENTIFICATION BY MASS SPECTROMETRY [LARGE SCALE ANALYSIS]</scope>
</reference>
<reference key="8">
    <citation type="journal article" date="2009" name="Sci. Signal.">
        <title>Quantitative phosphoproteomic analysis of T cell receptor signaling reveals system-wide modulation of protein-protein interactions.</title>
        <authorList>
            <person name="Mayya V."/>
            <person name="Lundgren D.H."/>
            <person name="Hwang S.-I."/>
            <person name="Rezaul K."/>
            <person name="Wu L."/>
            <person name="Eng J.K."/>
            <person name="Rodionov V."/>
            <person name="Han D.K."/>
        </authorList>
    </citation>
    <scope>PHOSPHORYLATION [LARGE SCALE ANALYSIS] AT SER-161</scope>
    <scope>IDENTIFICATION BY MASS SPECTROMETRY [LARGE SCALE ANALYSIS]</scope>
    <source>
        <tissue>Leukemic T-cell</tissue>
    </source>
</reference>
<reference key="9">
    <citation type="journal article" date="2010" name="Sci. Signal.">
        <title>Quantitative phosphoproteomics reveals widespread full phosphorylation site occupancy during mitosis.</title>
        <authorList>
            <person name="Olsen J.V."/>
            <person name="Vermeulen M."/>
            <person name="Santamaria A."/>
            <person name="Kumar C."/>
            <person name="Miller M.L."/>
            <person name="Jensen L.J."/>
            <person name="Gnad F."/>
            <person name="Cox J."/>
            <person name="Jensen T.S."/>
            <person name="Nigg E.A."/>
            <person name="Brunak S."/>
            <person name="Mann M."/>
        </authorList>
    </citation>
    <scope>PHOSPHORYLATION [LARGE SCALE ANALYSIS] AT SER-161</scope>
    <scope>IDENTIFICATION BY MASS SPECTROMETRY [LARGE SCALE ANALYSIS]</scope>
    <source>
        <tissue>Cervix carcinoma</tissue>
    </source>
</reference>
<reference key="10">
    <citation type="journal article" date="2013" name="J. Proteome Res.">
        <title>Toward a comprehensive characterization of a human cancer cell phosphoproteome.</title>
        <authorList>
            <person name="Zhou H."/>
            <person name="Di Palma S."/>
            <person name="Preisinger C."/>
            <person name="Peng M."/>
            <person name="Polat A.N."/>
            <person name="Heck A.J."/>
            <person name="Mohammed S."/>
        </authorList>
    </citation>
    <scope>PHOSPHORYLATION [LARGE SCALE ANALYSIS] AT THR-107 AND SER-161</scope>
    <scope>IDENTIFICATION BY MASS SPECTROMETRY [LARGE SCALE ANALYSIS]</scope>
    <source>
        <tissue>Cervix carcinoma</tissue>
        <tissue>Erythroleukemia</tissue>
    </source>
</reference>
<reference key="11">
    <citation type="journal article" date="2014" name="J. Proteomics">
        <title>An enzyme assisted RP-RPLC approach for in-depth analysis of human liver phosphoproteome.</title>
        <authorList>
            <person name="Bian Y."/>
            <person name="Song C."/>
            <person name="Cheng K."/>
            <person name="Dong M."/>
            <person name="Wang F."/>
            <person name="Huang J."/>
            <person name="Sun D."/>
            <person name="Wang L."/>
            <person name="Ye M."/>
            <person name="Zou H."/>
        </authorList>
    </citation>
    <scope>PHOSPHORYLATION [LARGE SCALE ANALYSIS] AT SER-161</scope>
    <scope>IDENTIFICATION BY MASS SPECTROMETRY [LARGE SCALE ANALYSIS]</scope>
    <source>
        <tissue>Liver</tissue>
    </source>
</reference>
<reference key="12">
    <citation type="journal article" date="2021" name="Sci. Rep.">
        <title>The miR-378c-Samd1 circuit promotes phenotypic modulation of vascular smooth muscle cells and foam cells formation in atherosclerosis lesions.</title>
        <authorList>
            <person name="Tian S."/>
            <person name="Cao Y."/>
            <person name="Wang J."/>
            <person name="Bi Y."/>
            <person name="Zhong J."/>
            <person name="Meng X."/>
            <person name="Sun W."/>
            <person name="Yang R."/>
            <person name="Gan L."/>
            <person name="Wang X."/>
            <person name="Li H."/>
            <person name="Wang R."/>
        </authorList>
    </citation>
    <scope>FUNCTION</scope>
    <scope>SUBCELLULAR LOCATION</scope>
</reference>
<reference evidence="10 11 12" key="13">
    <citation type="journal article" date="2021" name="Sci. Adv.">
        <title>The SAM domain-containing protein 1 (SAMD1) acts as a repressive chromatin regulator at unmethylated CpG islands.</title>
        <authorList>
            <person name="Stielow B."/>
            <person name="Zhou Y."/>
            <person name="Cao Y."/>
            <person name="Simon C."/>
            <person name="Pogoda H.M."/>
            <person name="Jiang J."/>
            <person name="Ren Y."/>
            <person name="Phanor S.K."/>
            <person name="Rohner I."/>
            <person name="Nist A."/>
            <person name="Stiewe T."/>
            <person name="Hammerschmidt M."/>
            <person name="Shi Y."/>
            <person name="Bulyk M.L."/>
            <person name="Wang Z."/>
            <person name="Liefke R."/>
        </authorList>
    </citation>
    <scope>X-RAY CRYSTALLOGRAPHY (1.12 ANGSTROMS) OF 27-105 AND 459-526</scope>
    <scope>DOMAIN</scope>
    <scope>MUTAGENESIS OF ARG-43; 45-ARG-LYS-46; ARG-48; 87-TYR-LYS-88; ARG-94 AND 498-ARG--LYS-514</scope>
    <scope>INTERACTION WITH KDM1A AND L3MBTL3</scope>
</reference>
<sequence>MAGPPALPPPETAAAATTAAAASSSAASPHYQEWILDTIDSLRSRKARPDLERICRMVRRRHGPEPERTRAELEKLIQQRAVLRVSYKGSISYRNAARVQPPRRGATPPAPPRAPRGAPAAAAAAAPPPTPAPPPPPAPVAAAAPARAPRAAAAAATAPPSPGPAQPGPRAQRAAPLAAPPPAPAAPPAVAPPAGPRRAPPPAVAAREPPLPPPPQPPAPPQQQQPPPPQPQPPPEGGAVRAGGAARPVSLREVVRYLGGSGGAGGRLTRGRVQGLLEEEAAARGRLERTRLGALALPRGDRPGRAPPAASARPSRSKRGGEERVLEKEEEEDDDEDEDEEDDVSEGSEVPESDRPAGAQHHQLNGERGPQSAKERVKEWTPCGPHQGQDEGRGPAPGSGTRQVFSMAAMNKEGGTASVATGPDSPSPVPLPPGKPALPGADGTPFGCPPGRKEKPSDPVEWTVMDVVEYFTEAGFPEQATAFQEQEIDGKSLLLMQRTDVLTGLSIRLGPALKIYEHHIKVLQQGHFEDDDPDGFLG</sequence>
<gene>
    <name evidence="9" type="primary">SAMD1</name>
</gene>
<proteinExistence type="evidence at protein level"/>
<dbReference type="EMBL" id="AY453840">
    <property type="protein sequence ID" value="AAR24087.1"/>
    <property type="molecule type" value="mRNA"/>
</dbReference>
<dbReference type="EMBL" id="AC022098">
    <property type="status" value="NOT_ANNOTATED_CDS"/>
    <property type="molecule type" value="Genomic_DNA"/>
</dbReference>
<dbReference type="EMBL" id="BC007384">
    <property type="protein sequence ID" value="AAH07384.2"/>
    <property type="molecule type" value="mRNA"/>
</dbReference>
<dbReference type="EMBL" id="BC030129">
    <property type="protein sequence ID" value="AAH30129.1"/>
    <property type="molecule type" value="mRNA"/>
</dbReference>
<dbReference type="EMBL" id="BC065477">
    <property type="protein sequence ID" value="AAH65477.1"/>
    <property type="molecule type" value="mRNA"/>
</dbReference>
<dbReference type="EMBL" id="BC080588">
    <property type="protein sequence ID" value="AAH80588.1"/>
    <property type="molecule type" value="mRNA"/>
</dbReference>
<dbReference type="RefSeq" id="NP_612361.1">
    <property type="nucleotide sequence ID" value="NM_138352.3"/>
</dbReference>
<dbReference type="RefSeq" id="XP_054178526.1">
    <property type="nucleotide sequence ID" value="XM_054322551.1"/>
</dbReference>
<dbReference type="RefSeq" id="XP_054188708.1">
    <property type="nucleotide sequence ID" value="XM_054332733.1"/>
</dbReference>
<dbReference type="PDB" id="6LUI">
    <property type="method" value="X-ray"/>
    <property type="resolution" value="1.78 A"/>
    <property type="chains" value="A=27-105"/>
</dbReference>
<dbReference type="PDB" id="6LUJ">
    <property type="method" value="X-ray"/>
    <property type="resolution" value="1.12 A"/>
    <property type="chains" value="A/B/C/D/E=459-523"/>
</dbReference>
<dbReference type="PDB" id="6LUK">
    <property type="method" value="X-ray"/>
    <property type="resolution" value="2.05 A"/>
    <property type="chains" value="A/B/C/D/E/F/G/H/I/J/K/L/M/N/O/P/Q/R/S/T=459-526"/>
</dbReference>
<dbReference type="PDB" id="8Y77">
    <property type="method" value="X-ray"/>
    <property type="resolution" value="1.50 A"/>
    <property type="chains" value="A=459-523"/>
</dbReference>
<dbReference type="PDBsum" id="6LUI"/>
<dbReference type="PDBsum" id="6LUJ"/>
<dbReference type="PDBsum" id="6LUK"/>
<dbReference type="PDBsum" id="8Y77"/>
<dbReference type="SMR" id="Q6SPF0"/>
<dbReference type="BioGRID" id="124704">
    <property type="interactions" value="180"/>
</dbReference>
<dbReference type="FunCoup" id="Q6SPF0">
    <property type="interactions" value="778"/>
</dbReference>
<dbReference type="IntAct" id="Q6SPF0">
    <property type="interactions" value="100"/>
</dbReference>
<dbReference type="MINT" id="Q6SPF0"/>
<dbReference type="STRING" id="9606.ENSP00000431971"/>
<dbReference type="GlyGen" id="Q6SPF0">
    <property type="glycosylation" value="2 sites, 1 O-linked glycan (1 site)"/>
</dbReference>
<dbReference type="iPTMnet" id="Q6SPF0"/>
<dbReference type="PhosphoSitePlus" id="Q6SPF0"/>
<dbReference type="BioMuta" id="SAMD1"/>
<dbReference type="DMDM" id="74749329"/>
<dbReference type="jPOST" id="Q6SPF0"/>
<dbReference type="MassIVE" id="Q6SPF0"/>
<dbReference type="ProteomicsDB" id="67359"/>
<dbReference type="Pumba" id="Q6SPF0"/>
<dbReference type="DNASU" id="90378"/>
<dbReference type="Ensembl" id="ENST00000673075.2">
    <property type="protein sequence ID" value="ENSP00000500116.1"/>
    <property type="gene ID" value="ENSG00000288488.2"/>
</dbReference>
<dbReference type="GeneID" id="90378"/>
<dbReference type="KEGG" id="hsa:90378"/>
<dbReference type="MANE-Select" id="ENST00000673075.2">
    <property type="protein sequence ID" value="ENSP00000500116.1"/>
    <property type="RefSeq nucleotide sequence ID" value="NM_138352.3"/>
    <property type="RefSeq protein sequence ID" value="NP_612361.1"/>
</dbReference>
<dbReference type="AGR" id="HGNC:17958"/>
<dbReference type="CTD" id="90378"/>
<dbReference type="DisGeNET" id="90378"/>
<dbReference type="GeneCards" id="SAMD1"/>
<dbReference type="HGNC" id="HGNC:17958">
    <property type="gene designation" value="SAMD1"/>
</dbReference>
<dbReference type="MIM" id="620206">
    <property type="type" value="gene"/>
</dbReference>
<dbReference type="neXtProt" id="NX_Q6SPF0"/>
<dbReference type="PharmGKB" id="PA34937"/>
<dbReference type="eggNOG" id="KOG2747">
    <property type="taxonomic scope" value="Eukaryota"/>
</dbReference>
<dbReference type="InParanoid" id="Q6SPF0"/>
<dbReference type="OrthoDB" id="10004495at2759"/>
<dbReference type="PAN-GO" id="Q6SPF0">
    <property type="GO annotations" value="4 GO annotations based on evolutionary models"/>
</dbReference>
<dbReference type="PathwayCommons" id="Q6SPF0"/>
<dbReference type="SignaLink" id="Q6SPF0"/>
<dbReference type="BioGRID-ORCS" id="90378">
    <property type="hits" value="34 hits in 295 CRISPR screens"/>
</dbReference>
<dbReference type="ChiTaRS" id="SAMD1">
    <property type="organism name" value="human"/>
</dbReference>
<dbReference type="GenomeRNAi" id="90378"/>
<dbReference type="Pharos" id="Q6SPF0">
    <property type="development level" value="Tdark"/>
</dbReference>
<dbReference type="PRO" id="PR:Q6SPF0"/>
<dbReference type="Proteomes" id="UP000005640">
    <property type="component" value="Unplaced"/>
</dbReference>
<dbReference type="RNAct" id="Q6SPF0">
    <property type="molecule type" value="protein"/>
</dbReference>
<dbReference type="GO" id="GO:0005694">
    <property type="term" value="C:chromosome"/>
    <property type="evidence" value="ECO:0007669"/>
    <property type="project" value="UniProtKB-SubCell"/>
</dbReference>
<dbReference type="GO" id="GO:0005615">
    <property type="term" value="C:extracellular space"/>
    <property type="evidence" value="ECO:0000250"/>
    <property type="project" value="UniProtKB"/>
</dbReference>
<dbReference type="GO" id="GO:0005634">
    <property type="term" value="C:nucleus"/>
    <property type="evidence" value="ECO:0000314"/>
    <property type="project" value="UniProtKB"/>
</dbReference>
<dbReference type="GO" id="GO:0003682">
    <property type="term" value="F:chromatin binding"/>
    <property type="evidence" value="ECO:0000314"/>
    <property type="project" value="UniProtKB"/>
</dbReference>
<dbReference type="GO" id="GO:0003677">
    <property type="term" value="F:DNA binding"/>
    <property type="evidence" value="ECO:0007669"/>
    <property type="project" value="InterPro"/>
</dbReference>
<dbReference type="GO" id="GO:0030169">
    <property type="term" value="F:low-density lipoprotein particle binding"/>
    <property type="evidence" value="ECO:0000250"/>
    <property type="project" value="UniProtKB"/>
</dbReference>
<dbReference type="GO" id="GO:0006325">
    <property type="term" value="P:chromatin organization"/>
    <property type="evidence" value="ECO:0007669"/>
    <property type="project" value="UniProtKB-KW"/>
</dbReference>
<dbReference type="GO" id="GO:0090077">
    <property type="term" value="P:foam cell differentiation"/>
    <property type="evidence" value="ECO:0000250"/>
    <property type="project" value="UniProtKB"/>
</dbReference>
<dbReference type="GO" id="GO:0034439">
    <property type="term" value="P:lipoprotein lipid oxidation"/>
    <property type="evidence" value="ECO:0000250"/>
    <property type="project" value="UniProtKB"/>
</dbReference>
<dbReference type="GO" id="GO:0000122">
    <property type="term" value="P:negative regulation of transcription by RNA polymerase II"/>
    <property type="evidence" value="ECO:0000250"/>
    <property type="project" value="UniProtKB"/>
</dbReference>
<dbReference type="GO" id="GO:0160217">
    <property type="term" value="P:negative regulation of transcription initiation-coupled chromatin remodeling"/>
    <property type="evidence" value="ECO:0000314"/>
    <property type="project" value="UniProtKB"/>
</dbReference>
<dbReference type="GO" id="GO:0051260">
    <property type="term" value="P:protein homooligomerization"/>
    <property type="evidence" value="ECO:0000314"/>
    <property type="project" value="UniProtKB"/>
</dbReference>
<dbReference type="CDD" id="cd09583">
    <property type="entry name" value="SAM_Atherin-like"/>
    <property type="match status" value="1"/>
</dbReference>
<dbReference type="Gene3D" id="1.10.150.50">
    <property type="entry name" value="Transcription Factor, Ets-1"/>
    <property type="match status" value="1"/>
</dbReference>
<dbReference type="InterPro" id="IPR001660">
    <property type="entry name" value="SAM"/>
</dbReference>
<dbReference type="InterPro" id="IPR013761">
    <property type="entry name" value="SAM/pointed_sf"/>
</dbReference>
<dbReference type="InterPro" id="IPR056983">
    <property type="entry name" value="SAMD1-like_SHD"/>
</dbReference>
<dbReference type="InterPro" id="IPR048589">
    <property type="entry name" value="SAMD1-like_WH"/>
</dbReference>
<dbReference type="PANTHER" id="PTHR36292:SF2">
    <property type="entry name" value="STERILE ALPHA MOTIF DOMAIN-CONTAINING PROTEIN 1"/>
    <property type="match status" value="1"/>
</dbReference>
<dbReference type="PANTHER" id="PTHR36292">
    <property type="entry name" value="UPF0575 PROTEIN C19ORF67"/>
    <property type="match status" value="1"/>
</dbReference>
<dbReference type="Pfam" id="PF00536">
    <property type="entry name" value="SAM_1"/>
    <property type="match status" value="1"/>
</dbReference>
<dbReference type="Pfam" id="PF24971">
    <property type="entry name" value="SAMD1_SHD"/>
    <property type="match status" value="1"/>
</dbReference>
<dbReference type="Pfam" id="PF21524">
    <property type="entry name" value="SAMD1_WH"/>
    <property type="match status" value="1"/>
</dbReference>
<dbReference type="SMART" id="SM00454">
    <property type="entry name" value="SAM"/>
    <property type="match status" value="1"/>
</dbReference>
<dbReference type="SUPFAM" id="SSF47769">
    <property type="entry name" value="SAM/Pointed domain"/>
    <property type="match status" value="1"/>
</dbReference>
<dbReference type="PROSITE" id="PS50105">
    <property type="entry name" value="SAM_DOMAIN"/>
    <property type="match status" value="1"/>
</dbReference>
<dbReference type="PROSITE" id="PS52014">
    <property type="entry name" value="SAMD1_WH"/>
    <property type="match status" value="1"/>
</dbReference>
<organism>
    <name type="scientific">Homo sapiens</name>
    <name type="common">Human</name>
    <dbReference type="NCBI Taxonomy" id="9606"/>
    <lineage>
        <taxon>Eukaryota</taxon>
        <taxon>Metazoa</taxon>
        <taxon>Chordata</taxon>
        <taxon>Craniata</taxon>
        <taxon>Vertebrata</taxon>
        <taxon>Euteleostomi</taxon>
        <taxon>Mammalia</taxon>
        <taxon>Eutheria</taxon>
        <taxon>Euarchontoglires</taxon>
        <taxon>Primates</taxon>
        <taxon>Haplorrhini</taxon>
        <taxon>Catarrhini</taxon>
        <taxon>Hominidae</taxon>
        <taxon>Homo</taxon>
    </lineage>
</organism>
<keyword id="KW-0002">3D-structure</keyword>
<keyword id="KW-0156">Chromatin regulator</keyword>
<keyword id="KW-0158">Chromosome</keyword>
<keyword id="KW-0539">Nucleus</keyword>
<keyword id="KW-0597">Phosphoprotein</keyword>
<keyword id="KW-1267">Proteomics identification</keyword>
<keyword id="KW-1185">Reference proteome</keyword>
<keyword id="KW-0964">Secreted</keyword>
<accession>Q6SPF0</accession>
<accession>Q6P0R3</accession>
<accession>Q6PIS7</accession>
<accession>Q96IM4</accession>